<gene>
    <name type="ordered locus">RMA_0498</name>
</gene>
<feature type="chain" id="PRO_1000060728" description="Putative membrane protein insertion efficiency factor">
    <location>
        <begin position="1"/>
        <end position="82"/>
    </location>
</feature>
<reference key="1">
    <citation type="journal article" date="2007" name="Genome Res.">
        <title>Lateral gene transfer between obligate intracellular bacteria: evidence from the Rickettsia massiliae genome.</title>
        <authorList>
            <person name="Blanc G."/>
            <person name="Ogata H."/>
            <person name="Robert C."/>
            <person name="Audic S."/>
            <person name="Claverie J.-M."/>
            <person name="Raoult D."/>
        </authorList>
    </citation>
    <scope>NUCLEOTIDE SEQUENCE [LARGE SCALE GENOMIC DNA]</scope>
    <source>
        <strain>Mtu5</strain>
    </source>
</reference>
<sequence>MTRILLLLLRFYQYFISPLLSNNCRFHPTCSEYAKEAISMHGSIKGLWLTFKRIIKCQPFCDGGYDTVPISIKNSKPLNKKI</sequence>
<comment type="function">
    <text evidence="1">Could be involved in insertion of integral membrane proteins into the membrane.</text>
</comment>
<comment type="subcellular location">
    <subcellularLocation>
        <location evidence="1">Cell inner membrane</location>
        <topology evidence="1">Peripheral membrane protein</topology>
        <orientation evidence="1">Cytoplasmic side</orientation>
    </subcellularLocation>
</comment>
<comment type="similarity">
    <text evidence="1">Belongs to the UPF0161 family.</text>
</comment>
<keyword id="KW-0997">Cell inner membrane</keyword>
<keyword id="KW-1003">Cell membrane</keyword>
<keyword id="KW-0472">Membrane</keyword>
<proteinExistence type="inferred from homology"/>
<evidence type="ECO:0000255" key="1">
    <source>
        <dbReference type="HAMAP-Rule" id="MF_00386"/>
    </source>
</evidence>
<dbReference type="EMBL" id="CP000683">
    <property type="protein sequence ID" value="ABV84709.1"/>
    <property type="molecule type" value="Genomic_DNA"/>
</dbReference>
<dbReference type="KEGG" id="rms:RMA_0498"/>
<dbReference type="HOGENOM" id="CLU_144811_5_2_5"/>
<dbReference type="Proteomes" id="UP000001311">
    <property type="component" value="Chromosome"/>
</dbReference>
<dbReference type="GO" id="GO:0005886">
    <property type="term" value="C:plasma membrane"/>
    <property type="evidence" value="ECO:0007669"/>
    <property type="project" value="UniProtKB-SubCell"/>
</dbReference>
<dbReference type="HAMAP" id="MF_00386">
    <property type="entry name" value="UPF0161_YidD"/>
    <property type="match status" value="1"/>
</dbReference>
<dbReference type="InterPro" id="IPR002696">
    <property type="entry name" value="Membr_insert_effic_factor_YidD"/>
</dbReference>
<dbReference type="NCBIfam" id="TIGR00278">
    <property type="entry name" value="membrane protein insertion efficiency factor YidD"/>
    <property type="match status" value="1"/>
</dbReference>
<dbReference type="PANTHER" id="PTHR33383">
    <property type="entry name" value="MEMBRANE PROTEIN INSERTION EFFICIENCY FACTOR-RELATED"/>
    <property type="match status" value="1"/>
</dbReference>
<dbReference type="PANTHER" id="PTHR33383:SF1">
    <property type="entry name" value="MEMBRANE PROTEIN INSERTION EFFICIENCY FACTOR-RELATED"/>
    <property type="match status" value="1"/>
</dbReference>
<dbReference type="Pfam" id="PF01809">
    <property type="entry name" value="YidD"/>
    <property type="match status" value="1"/>
</dbReference>
<dbReference type="SMART" id="SM01234">
    <property type="entry name" value="Haemolytic"/>
    <property type="match status" value="1"/>
</dbReference>
<protein>
    <recommendedName>
        <fullName evidence="1">Putative membrane protein insertion efficiency factor</fullName>
    </recommendedName>
</protein>
<name>YIDD_RICM5</name>
<organism>
    <name type="scientific">Rickettsia massiliae (strain Mtu5)</name>
    <dbReference type="NCBI Taxonomy" id="416276"/>
    <lineage>
        <taxon>Bacteria</taxon>
        <taxon>Pseudomonadati</taxon>
        <taxon>Pseudomonadota</taxon>
        <taxon>Alphaproteobacteria</taxon>
        <taxon>Rickettsiales</taxon>
        <taxon>Rickettsiaceae</taxon>
        <taxon>Rickettsieae</taxon>
        <taxon>Rickettsia</taxon>
        <taxon>spotted fever group</taxon>
    </lineage>
</organism>
<accession>A8F1C3</accession>